<gene>
    <name evidence="1" type="primary">hisD</name>
    <name type="ordered locus">SAV_6153</name>
</gene>
<name>HISX_STRAW</name>
<dbReference type="EC" id="1.1.1.23" evidence="1"/>
<dbReference type="EMBL" id="BA000030">
    <property type="protein sequence ID" value="BAC73864.1"/>
    <property type="molecule type" value="Genomic_DNA"/>
</dbReference>
<dbReference type="RefSeq" id="WP_010987554.1">
    <property type="nucleotide sequence ID" value="NZ_JZJK01000089.1"/>
</dbReference>
<dbReference type="SMR" id="Q82AA6"/>
<dbReference type="GeneID" id="41543230"/>
<dbReference type="KEGG" id="sma:SAVERM_6153"/>
<dbReference type="eggNOG" id="COG0141">
    <property type="taxonomic scope" value="Bacteria"/>
</dbReference>
<dbReference type="HOGENOM" id="CLU_006732_3_1_11"/>
<dbReference type="OrthoDB" id="9805269at2"/>
<dbReference type="UniPathway" id="UPA00031">
    <property type="reaction ID" value="UER00014"/>
</dbReference>
<dbReference type="Proteomes" id="UP000000428">
    <property type="component" value="Chromosome"/>
</dbReference>
<dbReference type="GO" id="GO:0005829">
    <property type="term" value="C:cytosol"/>
    <property type="evidence" value="ECO:0007669"/>
    <property type="project" value="TreeGrafter"/>
</dbReference>
<dbReference type="GO" id="GO:0004399">
    <property type="term" value="F:histidinol dehydrogenase activity"/>
    <property type="evidence" value="ECO:0007669"/>
    <property type="project" value="UniProtKB-UniRule"/>
</dbReference>
<dbReference type="GO" id="GO:0051287">
    <property type="term" value="F:NAD binding"/>
    <property type="evidence" value="ECO:0007669"/>
    <property type="project" value="InterPro"/>
</dbReference>
<dbReference type="GO" id="GO:0008270">
    <property type="term" value="F:zinc ion binding"/>
    <property type="evidence" value="ECO:0007669"/>
    <property type="project" value="UniProtKB-UniRule"/>
</dbReference>
<dbReference type="GO" id="GO:0000105">
    <property type="term" value="P:L-histidine biosynthetic process"/>
    <property type="evidence" value="ECO:0007669"/>
    <property type="project" value="UniProtKB-UniRule"/>
</dbReference>
<dbReference type="CDD" id="cd06572">
    <property type="entry name" value="Histidinol_dh"/>
    <property type="match status" value="1"/>
</dbReference>
<dbReference type="FunFam" id="3.40.50.1980:FF:000001">
    <property type="entry name" value="Histidinol dehydrogenase"/>
    <property type="match status" value="1"/>
</dbReference>
<dbReference type="Gene3D" id="1.20.5.1300">
    <property type="match status" value="1"/>
</dbReference>
<dbReference type="Gene3D" id="3.40.50.1980">
    <property type="entry name" value="Nitrogenase molybdenum iron protein domain"/>
    <property type="match status" value="2"/>
</dbReference>
<dbReference type="HAMAP" id="MF_01024">
    <property type="entry name" value="HisD"/>
    <property type="match status" value="1"/>
</dbReference>
<dbReference type="InterPro" id="IPR016161">
    <property type="entry name" value="Ald_DH/histidinol_DH"/>
</dbReference>
<dbReference type="InterPro" id="IPR001692">
    <property type="entry name" value="Histidinol_DH_CS"/>
</dbReference>
<dbReference type="InterPro" id="IPR022695">
    <property type="entry name" value="Histidinol_DH_monofunct"/>
</dbReference>
<dbReference type="InterPro" id="IPR012131">
    <property type="entry name" value="Hstdl_DH"/>
</dbReference>
<dbReference type="NCBIfam" id="TIGR00069">
    <property type="entry name" value="hisD"/>
    <property type="match status" value="1"/>
</dbReference>
<dbReference type="PANTHER" id="PTHR21256:SF2">
    <property type="entry name" value="HISTIDINE BIOSYNTHESIS TRIFUNCTIONAL PROTEIN"/>
    <property type="match status" value="1"/>
</dbReference>
<dbReference type="PANTHER" id="PTHR21256">
    <property type="entry name" value="HISTIDINOL DEHYDROGENASE HDH"/>
    <property type="match status" value="1"/>
</dbReference>
<dbReference type="Pfam" id="PF00815">
    <property type="entry name" value="Histidinol_dh"/>
    <property type="match status" value="1"/>
</dbReference>
<dbReference type="PIRSF" id="PIRSF000099">
    <property type="entry name" value="Histidinol_dh"/>
    <property type="match status" value="1"/>
</dbReference>
<dbReference type="PRINTS" id="PR00083">
    <property type="entry name" value="HOLDHDRGNASE"/>
</dbReference>
<dbReference type="SUPFAM" id="SSF53720">
    <property type="entry name" value="ALDH-like"/>
    <property type="match status" value="1"/>
</dbReference>
<dbReference type="PROSITE" id="PS00611">
    <property type="entry name" value="HISOL_DEHYDROGENASE"/>
    <property type="match status" value="1"/>
</dbReference>
<comment type="function">
    <text evidence="1">Catalyzes the sequential NAD-dependent oxidations of L-histidinol to L-histidinaldehyde and then to L-histidine.</text>
</comment>
<comment type="catalytic activity">
    <reaction evidence="1">
        <text>L-histidinol + 2 NAD(+) + H2O = L-histidine + 2 NADH + 3 H(+)</text>
        <dbReference type="Rhea" id="RHEA:20641"/>
        <dbReference type="ChEBI" id="CHEBI:15377"/>
        <dbReference type="ChEBI" id="CHEBI:15378"/>
        <dbReference type="ChEBI" id="CHEBI:57540"/>
        <dbReference type="ChEBI" id="CHEBI:57595"/>
        <dbReference type="ChEBI" id="CHEBI:57699"/>
        <dbReference type="ChEBI" id="CHEBI:57945"/>
        <dbReference type="EC" id="1.1.1.23"/>
    </reaction>
</comment>
<comment type="cofactor">
    <cofactor evidence="1">
        <name>Zn(2+)</name>
        <dbReference type="ChEBI" id="CHEBI:29105"/>
    </cofactor>
    <text evidence="1">Binds 1 zinc ion per subunit.</text>
</comment>
<comment type="pathway">
    <text evidence="1">Amino-acid biosynthesis; L-histidine biosynthesis; L-histidine from 5-phospho-alpha-D-ribose 1-diphosphate: step 9/9.</text>
</comment>
<comment type="similarity">
    <text evidence="1">Belongs to the histidinol dehydrogenase family.</text>
</comment>
<organism>
    <name type="scientific">Streptomyces avermitilis (strain ATCC 31267 / DSM 46492 / JCM 5070 / NBRC 14893 / NCIMB 12804 / NRRL 8165 / MA-4680)</name>
    <dbReference type="NCBI Taxonomy" id="227882"/>
    <lineage>
        <taxon>Bacteria</taxon>
        <taxon>Bacillati</taxon>
        <taxon>Actinomycetota</taxon>
        <taxon>Actinomycetes</taxon>
        <taxon>Kitasatosporales</taxon>
        <taxon>Streptomycetaceae</taxon>
        <taxon>Streptomyces</taxon>
    </lineage>
</organism>
<proteinExistence type="inferred from homology"/>
<keyword id="KW-0028">Amino-acid biosynthesis</keyword>
<keyword id="KW-0368">Histidine biosynthesis</keyword>
<keyword id="KW-0479">Metal-binding</keyword>
<keyword id="KW-0520">NAD</keyword>
<keyword id="KW-0560">Oxidoreductase</keyword>
<keyword id="KW-1185">Reference proteome</keyword>
<keyword id="KW-0862">Zinc</keyword>
<accession>Q82AA6</accession>
<evidence type="ECO:0000255" key="1">
    <source>
        <dbReference type="HAMAP-Rule" id="MF_01024"/>
    </source>
</evidence>
<feature type="chain" id="PRO_0000135859" description="Histidinol dehydrogenase">
    <location>
        <begin position="1"/>
        <end position="441"/>
    </location>
</feature>
<feature type="active site" description="Proton acceptor" evidence="1">
    <location>
        <position position="332"/>
    </location>
</feature>
<feature type="active site" description="Proton acceptor" evidence="1">
    <location>
        <position position="333"/>
    </location>
</feature>
<feature type="binding site" evidence="1">
    <location>
        <position position="240"/>
    </location>
    <ligand>
        <name>substrate</name>
    </ligand>
</feature>
<feature type="binding site" evidence="1">
    <location>
        <position position="262"/>
    </location>
    <ligand>
        <name>substrate</name>
    </ligand>
</feature>
<feature type="binding site" evidence="1">
    <location>
        <position position="262"/>
    </location>
    <ligand>
        <name>Zn(2+)</name>
        <dbReference type="ChEBI" id="CHEBI:29105"/>
    </ligand>
</feature>
<feature type="binding site" evidence="1">
    <location>
        <position position="265"/>
    </location>
    <ligand>
        <name>substrate</name>
    </ligand>
</feature>
<feature type="binding site" evidence="1">
    <location>
        <position position="265"/>
    </location>
    <ligand>
        <name>Zn(2+)</name>
        <dbReference type="ChEBI" id="CHEBI:29105"/>
    </ligand>
</feature>
<feature type="binding site" evidence="1">
    <location>
        <position position="333"/>
    </location>
    <ligand>
        <name>substrate</name>
    </ligand>
</feature>
<feature type="binding site" evidence="1">
    <location>
        <position position="366"/>
    </location>
    <ligand>
        <name>substrate</name>
    </ligand>
</feature>
<feature type="binding site" evidence="1">
    <location>
        <position position="366"/>
    </location>
    <ligand>
        <name>Zn(2+)</name>
        <dbReference type="ChEBI" id="CHEBI:29105"/>
    </ligand>
</feature>
<feature type="binding site" evidence="1">
    <location>
        <position position="420"/>
    </location>
    <ligand>
        <name>substrate</name>
    </ligand>
</feature>
<feature type="binding site" evidence="1">
    <location>
        <position position="425"/>
    </location>
    <ligand>
        <name>substrate</name>
    </ligand>
</feature>
<feature type="binding site" evidence="1">
    <location>
        <position position="425"/>
    </location>
    <ligand>
        <name>Zn(2+)</name>
        <dbReference type="ChEBI" id="CHEBI:29105"/>
    </ligand>
</feature>
<reference key="1">
    <citation type="journal article" date="2001" name="Proc. Natl. Acad. Sci. U.S.A.">
        <title>Genome sequence of an industrial microorganism Streptomyces avermitilis: deducing the ability of producing secondary metabolites.</title>
        <authorList>
            <person name="Omura S."/>
            <person name="Ikeda H."/>
            <person name="Ishikawa J."/>
            <person name="Hanamoto A."/>
            <person name="Takahashi C."/>
            <person name="Shinose M."/>
            <person name="Takahashi Y."/>
            <person name="Horikawa H."/>
            <person name="Nakazawa H."/>
            <person name="Osonoe T."/>
            <person name="Kikuchi H."/>
            <person name="Shiba T."/>
            <person name="Sakaki Y."/>
            <person name="Hattori M."/>
        </authorList>
    </citation>
    <scope>NUCLEOTIDE SEQUENCE [LARGE SCALE GENOMIC DNA]</scope>
    <source>
        <strain>ATCC 31267 / DSM 46492 / JCM 5070 / NBRC 14893 / NCIMB 12804 / NRRL 8165 / MA-4680</strain>
    </source>
</reference>
<reference key="2">
    <citation type="journal article" date="2003" name="Nat. Biotechnol.">
        <title>Complete genome sequence and comparative analysis of the industrial microorganism Streptomyces avermitilis.</title>
        <authorList>
            <person name="Ikeda H."/>
            <person name="Ishikawa J."/>
            <person name="Hanamoto A."/>
            <person name="Shinose M."/>
            <person name="Kikuchi H."/>
            <person name="Shiba T."/>
            <person name="Sakaki Y."/>
            <person name="Hattori M."/>
            <person name="Omura S."/>
        </authorList>
    </citation>
    <scope>NUCLEOTIDE SEQUENCE [LARGE SCALE GENOMIC DNA]</scope>
    <source>
        <strain>ATCC 31267 / DSM 46492 / JCM 5070 / NBRC 14893 / NCIMB 12804 / NRRL 8165 / MA-4680</strain>
    </source>
</reference>
<protein>
    <recommendedName>
        <fullName evidence="1">Histidinol dehydrogenase</fullName>
        <shortName evidence="1">HDH</shortName>
        <ecNumber evidence="1">1.1.1.23</ecNumber>
    </recommendedName>
</protein>
<sequence length="441" mass="46169">MISRIDLRGDALPEGSALRDLLPRADFDVSAALEKVRPICEAVHHRGDAALIDFAEKFDGVRLESVRVPARALADALEQLDPAVRAALEESIRRARLVHREQRRTTHTTQVVPGGSVTEKWVPVDRVGLYAPGGRSVYPSSVVMNVVPAQEAGVESIALASPAQAEFGGLPHPTILAACALLGVDEVYAAGGATAVAMFAYGTESCAPADMVTGPGNIWVAAAKRYFTGKIGIDAEAGPTEIAVLADSTADPVHVASDLISQAEHDPLAAAVLVTDSVELADAVEKELEPQVAATKHIDDRIVPALKGRQSAIVLVDGVDEGLRVVDAYGAEHLEIQTADAAAVADRVRNAGAIFIGPWAPVSLGDYAAGSNHVLPTGGCACHSSGLSVQSFLRGIHIVDYTKDALADVAHHVVTLAEAEDLPAHGAAIKARFGWKVPESK</sequence>